<protein>
    <recommendedName>
        <fullName>Ribonuclease P protein subunit p38</fullName>
        <shortName>RNaseP protein p38</shortName>
    </recommendedName>
</protein>
<comment type="function">
    <text evidence="1 4 5 6 7">Component of ribonuclease P, a ribonucleoprotein complex that generates mature tRNA molecules by cleaving their 5'-ends (PubMed:10444065, PubMed:30454648, PubMed:9037013, PubMed:9630247). Also a component of the MRP ribonuclease complex, which cleaves pre-rRNA sequences (PubMed:28115465).</text>
</comment>
<comment type="subunit">
    <text evidence="1 3 4 5 6 7">Component of nuclear RNase P and RNase MRP ribonucleoproteins (PubMed:10444065, PubMed:16723659, PubMed:30454648, PubMed:9037013, PubMed:9630247). RNase P consists of a catalytic RNA moiety and about 10 protein subunits; POP1, POP4, POP5, POP7, RPP14, RPP21, RPP25, RPP30, RPP38 and RPP40 (PubMed:10444065, PubMed:16723659, PubMed:30454648, PubMed:9037013, PubMed:9630247). Within the RNase P complex, POP1, POP7 and RPP25 form the 'finger' subcomplex, POP5, RPP14, RPP40 and homodimeric RPP30 form the 'palm' subcomplex, and RPP21, POP4 and RPP38 form the 'wrist' subcomplex. All subunits of the RNase P complex interact with the catalytic RNA (PubMed:30454648). Several subunits of RNase P are also part of the RNase MRP complex. RNase MRP consists of a catalytic RNA moiety and about 8 protein subunits; POP1, POP7, RPP25, RPP30, RPP38, RPP40 and possibly also POP4 and POP5 (PubMed:16723659, PubMed:28115465).</text>
</comment>
<comment type="interaction">
    <interactant intactId="EBI-366493">
        <id>P78345</id>
    </interactant>
    <interactant intactId="EBI-389883">
        <id>P16333</id>
        <label>NCK1</label>
    </interactant>
    <organismsDiffer>false</organismsDiffer>
    <experiments>2</experiments>
</comment>
<comment type="interaction">
    <interactant intactId="EBI-366493">
        <id>P78345</id>
    </interactant>
    <interactant intactId="EBI-366477">
        <id>O95707</id>
        <label>POP4</label>
    </interactant>
    <organismsDiffer>false</organismsDiffer>
    <experiments>5</experiments>
</comment>
<comment type="subcellular location">
    <subcellularLocation>
        <location evidence="1">Nucleus</location>
        <location evidence="1">Nucleolus</location>
    </subcellularLocation>
</comment>
<comment type="miscellaneous">
    <text>Autoantibodies against RPP38 are found in sera from scleroderma patients.</text>
</comment>
<comment type="similarity">
    <text evidence="9">Belongs to the eukaryotic ribosomal protein eL8 family.</text>
</comment>
<gene>
    <name type="primary">RPP38</name>
</gene>
<accession>P78345</accession>
<accession>B3KPY0</accession>
<accession>D3DRT8</accession>
<accession>Q53F71</accession>
<accession>Q8NHS8</accession>
<organism>
    <name type="scientific">Homo sapiens</name>
    <name type="common">Human</name>
    <dbReference type="NCBI Taxonomy" id="9606"/>
    <lineage>
        <taxon>Eukaryota</taxon>
        <taxon>Metazoa</taxon>
        <taxon>Chordata</taxon>
        <taxon>Craniata</taxon>
        <taxon>Vertebrata</taxon>
        <taxon>Euteleostomi</taxon>
        <taxon>Mammalia</taxon>
        <taxon>Eutheria</taxon>
        <taxon>Euarchontoglires</taxon>
        <taxon>Primates</taxon>
        <taxon>Haplorrhini</taxon>
        <taxon>Catarrhini</taxon>
        <taxon>Hominidae</taxon>
        <taxon>Homo</taxon>
    </lineage>
</organism>
<sequence>MAAAPQAPGRGSLRKTRPLVVKTSLNNPYIIRWSALESEDMHFILQTLEDRLKAIGLQKIEDKKKKNKTPFLKKESREKCSIAVDISENLKEKKTDAKQQVSGWTPAHVRKQLAIGVNEVTRALERRELLLVLVCKSVKPAMITSHLIQLSLSRSVPACQVPRLSERIAPVIGLKCVLALAFKKNTTDFVDEVRAIIPRVPSLSVPWLQDRIEDSGENLETEPLESQDRELLDTSFEDLSKPKRKLADGRQASVTLQPLKIKKLIPNPNKIRKPPKSKKATPK</sequence>
<feature type="initiator methionine" description="Removed" evidence="13 16">
    <location>
        <position position="1"/>
    </location>
</feature>
<feature type="chain" id="PRO_0000136783" description="Ribonuclease P protein subunit p38">
    <location>
        <begin position="2"/>
        <end position="283"/>
    </location>
</feature>
<feature type="modified residue" description="N-acetylalanine" evidence="13 16">
    <location>
        <position position="2"/>
    </location>
</feature>
<feature type="modified residue" description="Phosphoserine" evidence="17">
    <location>
        <position position="12"/>
    </location>
</feature>
<feature type="modified residue" description="Phosphoserine" evidence="15">
    <location>
        <position position="226"/>
    </location>
</feature>
<feature type="modified residue" description="Phosphoserine" evidence="12 14 17">
    <location>
        <position position="235"/>
    </location>
</feature>
<feature type="sequence variant" id="VAR_051811" description="In dbSNP:rs3814171.">
    <original>I</original>
    <variation>V</variation>
    <location>
        <position position="86"/>
    </location>
</feature>
<feature type="sequence variant" id="VAR_023960" description="In dbSNP:rs1052157.">
    <original>E</original>
    <variation>D</variation>
    <location>
        <position position="88"/>
    </location>
</feature>
<feature type="sequence variant" id="VAR_023961" description="In dbSNP:rs1132078." evidence="6">
    <original>A</original>
    <variation>V</variation>
    <location>
        <position position="114"/>
    </location>
</feature>
<feature type="sequence variant" id="VAR_023962" description="In dbSNP:rs15772." evidence="2 8">
    <original>A</original>
    <variation>G</variation>
    <location>
        <position position="181"/>
    </location>
</feature>
<feature type="sequence variant" id="VAR_051812" description="In dbSNP:rs12249258.">
    <original>S</original>
    <variation>R</variation>
    <location>
        <position position="202"/>
    </location>
</feature>
<feature type="sequence variant" id="VAR_029298" description="In dbSNP:rs10242.">
    <original>I</original>
    <variation>T</variation>
    <location>
        <position position="212"/>
    </location>
</feature>
<feature type="sequence variant" id="VAR_051813" description="In dbSNP:rs34040166.">
    <original>R</original>
    <variation>G</variation>
    <location>
        <position position="250"/>
    </location>
</feature>
<feature type="sequence conflict" description="In Ref. 1; AA sequence." evidence="9" ref="1">
    <original>S</original>
    <variation>A</variation>
    <location>
        <position position="24"/>
    </location>
</feature>
<keyword id="KW-0002">3D-structure</keyword>
<keyword id="KW-0007">Acetylation</keyword>
<keyword id="KW-0903">Direct protein sequencing</keyword>
<keyword id="KW-0539">Nucleus</keyword>
<keyword id="KW-0597">Phosphoprotein</keyword>
<keyword id="KW-1267">Proteomics identification</keyword>
<keyword id="KW-1185">Reference proteome</keyword>
<keyword id="KW-0694">RNA-binding</keyword>
<keyword id="KW-0698">rRNA processing</keyword>
<keyword id="KW-0819">tRNA processing</keyword>
<dbReference type="EMBL" id="U77664">
    <property type="protein sequence ID" value="AAC51142.1"/>
    <property type="molecule type" value="mRNA"/>
</dbReference>
<dbReference type="EMBL" id="AK057006">
    <property type="protein sequence ID" value="BAG51842.1"/>
    <property type="molecule type" value="mRNA"/>
</dbReference>
<dbReference type="EMBL" id="CR541816">
    <property type="protein sequence ID" value="CAG46615.1"/>
    <property type="molecule type" value="mRNA"/>
</dbReference>
<dbReference type="EMBL" id="AK223418">
    <property type="protein sequence ID" value="BAD97138.1"/>
    <property type="molecule type" value="mRNA"/>
</dbReference>
<dbReference type="EMBL" id="AL590365">
    <property type="status" value="NOT_ANNOTATED_CDS"/>
    <property type="molecule type" value="Genomic_DNA"/>
</dbReference>
<dbReference type="EMBL" id="CH471072">
    <property type="protein sequence ID" value="EAW86240.1"/>
    <property type="molecule type" value="Genomic_DNA"/>
</dbReference>
<dbReference type="EMBL" id="CH471072">
    <property type="protein sequence ID" value="EAW86241.1"/>
    <property type="molecule type" value="Genomic_DNA"/>
</dbReference>
<dbReference type="EMBL" id="BC029494">
    <property type="protein sequence ID" value="AAH29494.1"/>
    <property type="molecule type" value="mRNA"/>
</dbReference>
<dbReference type="CCDS" id="CCDS7108.1"/>
<dbReference type="RefSeq" id="NP_001091059.1">
    <property type="nucleotide sequence ID" value="NM_001097590.3"/>
</dbReference>
<dbReference type="RefSeq" id="NP_001252530.1">
    <property type="nucleotide sequence ID" value="NM_001265601.2"/>
</dbReference>
<dbReference type="RefSeq" id="NP_006405.2">
    <property type="nucleotide sequence ID" value="NM_006414.5"/>
</dbReference>
<dbReference type="RefSeq" id="NP_892117.1">
    <property type="nucleotide sequence ID" value="NM_183005.5"/>
</dbReference>
<dbReference type="RefSeq" id="XP_006717426.1">
    <property type="nucleotide sequence ID" value="XM_006717363.3"/>
</dbReference>
<dbReference type="RefSeq" id="XP_006717427.1">
    <property type="nucleotide sequence ID" value="XM_006717364.5"/>
</dbReference>
<dbReference type="RefSeq" id="XP_011517595.1">
    <property type="nucleotide sequence ID" value="XM_011519293.3"/>
</dbReference>
<dbReference type="RefSeq" id="XP_016870968.1">
    <property type="nucleotide sequence ID" value="XM_017015479.3"/>
</dbReference>
<dbReference type="RefSeq" id="XP_016870969.1">
    <property type="nucleotide sequence ID" value="XM_017015480.3"/>
</dbReference>
<dbReference type="RefSeq" id="XP_016870970.1">
    <property type="nucleotide sequence ID" value="XM_017015481.3"/>
</dbReference>
<dbReference type="RefSeq" id="XP_054220467.1">
    <property type="nucleotide sequence ID" value="XM_054364492.1"/>
</dbReference>
<dbReference type="RefSeq" id="XP_054220468.1">
    <property type="nucleotide sequence ID" value="XM_054364493.1"/>
</dbReference>
<dbReference type="RefSeq" id="XP_054220469.1">
    <property type="nucleotide sequence ID" value="XM_054364494.1"/>
</dbReference>
<dbReference type="RefSeq" id="XP_054220470.1">
    <property type="nucleotide sequence ID" value="XM_054364495.1"/>
</dbReference>
<dbReference type="RefSeq" id="XP_054220471.1">
    <property type="nucleotide sequence ID" value="XM_054364496.1"/>
</dbReference>
<dbReference type="RefSeq" id="XP_054220472.1">
    <property type="nucleotide sequence ID" value="XM_054364497.1"/>
</dbReference>
<dbReference type="PDB" id="6AHR">
    <property type="method" value="EM"/>
    <property type="resolution" value="3.92 A"/>
    <property type="chains" value="C=1-283"/>
</dbReference>
<dbReference type="PDB" id="6AHU">
    <property type="method" value="EM"/>
    <property type="resolution" value="3.66 A"/>
    <property type="chains" value="C=1-283"/>
</dbReference>
<dbReference type="PDBsum" id="6AHR"/>
<dbReference type="PDBsum" id="6AHU"/>
<dbReference type="EMDB" id="EMD-9626"/>
<dbReference type="EMDB" id="EMD-9627"/>
<dbReference type="SMR" id="P78345"/>
<dbReference type="BioGRID" id="115808">
    <property type="interactions" value="149"/>
</dbReference>
<dbReference type="ComplexPortal" id="CPX-2876">
    <property type="entry name" value="Ribonuclease MRP complex"/>
</dbReference>
<dbReference type="ComplexPortal" id="CPX-2877">
    <property type="entry name" value="Nucleolar ribonuclease P complex"/>
</dbReference>
<dbReference type="CORUM" id="P78345"/>
<dbReference type="FunCoup" id="P78345">
    <property type="interactions" value="1366"/>
</dbReference>
<dbReference type="IntAct" id="P78345">
    <property type="interactions" value="56"/>
</dbReference>
<dbReference type="STRING" id="9606.ENSP00000478982"/>
<dbReference type="GlyGen" id="P78345">
    <property type="glycosylation" value="1 site, 1 O-linked glycan (1 site)"/>
</dbReference>
<dbReference type="iPTMnet" id="P78345"/>
<dbReference type="PhosphoSitePlus" id="P78345"/>
<dbReference type="BioMuta" id="RPP38"/>
<dbReference type="DMDM" id="83305638"/>
<dbReference type="jPOST" id="P78345"/>
<dbReference type="MassIVE" id="P78345"/>
<dbReference type="PaxDb" id="9606-ENSP00000478982"/>
<dbReference type="PeptideAtlas" id="P78345"/>
<dbReference type="ProteomicsDB" id="57576"/>
<dbReference type="Pumba" id="P78345"/>
<dbReference type="Antibodypedia" id="25084">
    <property type="antibodies" value="115 antibodies from 21 providers"/>
</dbReference>
<dbReference type="DNASU" id="10557"/>
<dbReference type="Ensembl" id="ENST00000378197.5">
    <property type="protein sequence ID" value="ENSP00000367439.4"/>
    <property type="gene ID" value="ENSG00000152464.15"/>
</dbReference>
<dbReference type="Ensembl" id="ENST00000378202.5">
    <property type="protein sequence ID" value="ENSP00000367444.5"/>
    <property type="gene ID" value="ENSG00000152464.15"/>
</dbReference>
<dbReference type="Ensembl" id="ENST00000378203.5">
    <property type="protein sequence ID" value="ENSP00000367445.1"/>
    <property type="gene ID" value="ENSG00000152464.15"/>
</dbReference>
<dbReference type="Ensembl" id="ENST00000616640.1">
    <property type="protein sequence ID" value="ENSP00000478982.1"/>
    <property type="gene ID" value="ENSG00000152464.15"/>
</dbReference>
<dbReference type="GeneID" id="10557"/>
<dbReference type="KEGG" id="hsa:10557"/>
<dbReference type="MANE-Select" id="ENST00000378197.5">
    <property type="protein sequence ID" value="ENSP00000367439.4"/>
    <property type="RefSeq nucleotide sequence ID" value="NM_183005.5"/>
    <property type="RefSeq protein sequence ID" value="NP_892117.1"/>
</dbReference>
<dbReference type="UCSC" id="uc001inx.6">
    <property type="organism name" value="human"/>
</dbReference>
<dbReference type="AGR" id="HGNC:30329"/>
<dbReference type="CTD" id="10557"/>
<dbReference type="DisGeNET" id="10557"/>
<dbReference type="GeneCards" id="RPP38"/>
<dbReference type="HGNC" id="HGNC:30329">
    <property type="gene designation" value="RPP38"/>
</dbReference>
<dbReference type="HPA" id="ENSG00000152464">
    <property type="expression patterns" value="Low tissue specificity"/>
</dbReference>
<dbReference type="MIM" id="606116">
    <property type="type" value="gene"/>
</dbReference>
<dbReference type="neXtProt" id="NX_P78345"/>
<dbReference type="OpenTargets" id="ENSG00000152464"/>
<dbReference type="PharmGKB" id="PA134957031"/>
<dbReference type="VEuPathDB" id="HostDB:ENSG00000152464"/>
<dbReference type="eggNOG" id="KOG3387">
    <property type="taxonomic scope" value="Eukaryota"/>
</dbReference>
<dbReference type="GeneTree" id="ENSGT00390000007526"/>
<dbReference type="HOGENOM" id="CLU_082744_0_0_1"/>
<dbReference type="InParanoid" id="P78345"/>
<dbReference type="OMA" id="NQQVSGW"/>
<dbReference type="OrthoDB" id="20109at2759"/>
<dbReference type="PAN-GO" id="P78345">
    <property type="GO annotations" value="5 GO annotations based on evolutionary models"/>
</dbReference>
<dbReference type="PhylomeDB" id="P78345"/>
<dbReference type="TreeFam" id="TF332558"/>
<dbReference type="BRENDA" id="3.1.26.5">
    <property type="organism ID" value="2681"/>
</dbReference>
<dbReference type="PathwayCommons" id="P78345"/>
<dbReference type="Reactome" id="R-HSA-6784531">
    <property type="pathway name" value="tRNA processing in the nucleus"/>
</dbReference>
<dbReference type="Reactome" id="R-HSA-6791226">
    <property type="pathway name" value="Major pathway of rRNA processing in the nucleolus and cytosol"/>
</dbReference>
<dbReference type="SignaLink" id="P78345"/>
<dbReference type="BioGRID-ORCS" id="10557">
    <property type="hits" value="657 hits in 1167 CRISPR screens"/>
</dbReference>
<dbReference type="CD-CODE" id="91857CE7">
    <property type="entry name" value="Nucleolus"/>
</dbReference>
<dbReference type="ChiTaRS" id="RPP38">
    <property type="organism name" value="human"/>
</dbReference>
<dbReference type="GeneWiki" id="RPP38"/>
<dbReference type="GenomeRNAi" id="10557"/>
<dbReference type="Pharos" id="P78345">
    <property type="development level" value="Tbio"/>
</dbReference>
<dbReference type="PRO" id="PR:P78345"/>
<dbReference type="Proteomes" id="UP000005640">
    <property type="component" value="Chromosome 10"/>
</dbReference>
<dbReference type="RNAct" id="P78345">
    <property type="molecule type" value="protein"/>
</dbReference>
<dbReference type="Bgee" id="ENSG00000152464">
    <property type="expression patterns" value="Expressed in left testis and 202 other cell types or tissues"/>
</dbReference>
<dbReference type="ExpressionAtlas" id="P78345">
    <property type="expression patterns" value="baseline and differential"/>
</dbReference>
<dbReference type="GO" id="GO:0001650">
    <property type="term" value="C:fibrillar center"/>
    <property type="evidence" value="ECO:0000314"/>
    <property type="project" value="HPA"/>
</dbReference>
<dbReference type="GO" id="GO:0030681">
    <property type="term" value="C:multimeric ribonuclease P complex"/>
    <property type="evidence" value="ECO:0000314"/>
    <property type="project" value="UniProtKB"/>
</dbReference>
<dbReference type="GO" id="GO:0005655">
    <property type="term" value="C:nucleolar ribonuclease P complex"/>
    <property type="evidence" value="ECO:0007669"/>
    <property type="project" value="InterPro"/>
</dbReference>
<dbReference type="GO" id="GO:0005730">
    <property type="term" value="C:nucleolus"/>
    <property type="evidence" value="ECO:0000314"/>
    <property type="project" value="UniProtKB"/>
</dbReference>
<dbReference type="GO" id="GO:0005654">
    <property type="term" value="C:nucleoplasm"/>
    <property type="evidence" value="ECO:0000304"/>
    <property type="project" value="Reactome"/>
</dbReference>
<dbReference type="GO" id="GO:0000172">
    <property type="term" value="C:ribonuclease MRP complex"/>
    <property type="evidence" value="ECO:0007669"/>
    <property type="project" value="InterPro"/>
</dbReference>
<dbReference type="GO" id="GO:0004526">
    <property type="term" value="F:ribonuclease P activity"/>
    <property type="evidence" value="ECO:0007669"/>
    <property type="project" value="UniProtKB-EC"/>
</dbReference>
<dbReference type="GO" id="GO:0033204">
    <property type="term" value="F:ribonuclease P RNA binding"/>
    <property type="evidence" value="ECO:0000314"/>
    <property type="project" value="UniProtKB"/>
</dbReference>
<dbReference type="GO" id="GO:0006364">
    <property type="term" value="P:rRNA processing"/>
    <property type="evidence" value="ECO:0007669"/>
    <property type="project" value="UniProtKB-KW"/>
</dbReference>
<dbReference type="GO" id="GO:0001682">
    <property type="term" value="P:tRNA 5'-leader removal"/>
    <property type="evidence" value="ECO:0000314"/>
    <property type="project" value="UniProtKB"/>
</dbReference>
<dbReference type="FunFam" id="3.30.1330.30:FF:000042">
    <property type="entry name" value="Ribonuclease P protein subunit p38"/>
    <property type="match status" value="1"/>
</dbReference>
<dbReference type="Gene3D" id="3.30.1330.30">
    <property type="match status" value="1"/>
</dbReference>
<dbReference type="InterPro" id="IPR029064">
    <property type="entry name" value="Ribosomal_eL30-like_sf"/>
</dbReference>
<dbReference type="InterPro" id="IPR004038">
    <property type="entry name" value="Ribosomal_eL8/eL30/eS12/Gad45"/>
</dbReference>
<dbReference type="InterPro" id="IPR042848">
    <property type="entry name" value="Rpp38"/>
</dbReference>
<dbReference type="PANTHER" id="PTHR46948">
    <property type="entry name" value="RIBONUCLEASE P PROTEIN SUBUNIT P38"/>
    <property type="match status" value="1"/>
</dbReference>
<dbReference type="PANTHER" id="PTHR46948:SF1">
    <property type="entry name" value="RIBONUCLEASE P PROTEIN SUBUNIT P38"/>
    <property type="match status" value="1"/>
</dbReference>
<dbReference type="Pfam" id="PF01248">
    <property type="entry name" value="Ribosomal_L7Ae"/>
    <property type="match status" value="1"/>
</dbReference>
<dbReference type="SUPFAM" id="SSF55315">
    <property type="entry name" value="L30e-like"/>
    <property type="match status" value="1"/>
</dbReference>
<name>RPP38_HUMAN</name>
<evidence type="ECO:0000269" key="1">
    <source>
    </source>
</evidence>
<evidence type="ECO:0000269" key="2">
    <source>
    </source>
</evidence>
<evidence type="ECO:0000269" key="3">
    <source>
    </source>
</evidence>
<evidence type="ECO:0000269" key="4">
    <source>
    </source>
</evidence>
<evidence type="ECO:0000269" key="5">
    <source>
    </source>
</evidence>
<evidence type="ECO:0000269" key="6">
    <source>
    </source>
</evidence>
<evidence type="ECO:0000269" key="7">
    <source>
    </source>
</evidence>
<evidence type="ECO:0000269" key="8">
    <source ref="4"/>
</evidence>
<evidence type="ECO:0000305" key="9"/>
<evidence type="ECO:0007744" key="10">
    <source>
        <dbReference type="PDB" id="6AHR"/>
    </source>
</evidence>
<evidence type="ECO:0007744" key="11">
    <source>
        <dbReference type="PDB" id="6AHU"/>
    </source>
</evidence>
<evidence type="ECO:0007744" key="12">
    <source>
    </source>
</evidence>
<evidence type="ECO:0007744" key="13">
    <source>
    </source>
</evidence>
<evidence type="ECO:0007744" key="14">
    <source>
    </source>
</evidence>
<evidence type="ECO:0007744" key="15">
    <source>
    </source>
</evidence>
<evidence type="ECO:0007744" key="16">
    <source>
    </source>
</evidence>
<evidence type="ECO:0007744" key="17">
    <source>
    </source>
</evidence>
<proteinExistence type="evidence at protein level"/>
<reference key="1">
    <citation type="journal article" date="1997" name="Proc. Natl. Acad. Sci. U.S.A.">
        <title>Characterization of two scleroderma autoimmune antigens that copurify with human ribonuclease P.</title>
        <authorList>
            <person name="Eder P.S."/>
            <person name="Kekuda R."/>
            <person name="Stolc V."/>
            <person name="Altman S."/>
        </authorList>
    </citation>
    <scope>NUCLEOTIDE SEQUENCE [MRNA]</scope>
    <scope>PROTEIN SEQUENCE OF 24-32; 113-122 AND 212-228</scope>
    <scope>VARIANT VAL-114</scope>
    <scope>FUNCTION</scope>
    <scope>SUBUNIT</scope>
</reference>
<reference key="2">
    <citation type="journal article" date="2004" name="Nat. Genet.">
        <title>Complete sequencing and characterization of 21,243 full-length human cDNAs.</title>
        <authorList>
            <person name="Ota T."/>
            <person name="Suzuki Y."/>
            <person name="Nishikawa T."/>
            <person name="Otsuki T."/>
            <person name="Sugiyama T."/>
            <person name="Irie R."/>
            <person name="Wakamatsu A."/>
            <person name="Hayashi K."/>
            <person name="Sato H."/>
            <person name="Nagai K."/>
            <person name="Kimura K."/>
            <person name="Makita H."/>
            <person name="Sekine M."/>
            <person name="Obayashi M."/>
            <person name="Nishi T."/>
            <person name="Shibahara T."/>
            <person name="Tanaka T."/>
            <person name="Ishii S."/>
            <person name="Yamamoto J."/>
            <person name="Saito K."/>
            <person name="Kawai Y."/>
            <person name="Isono Y."/>
            <person name="Nakamura Y."/>
            <person name="Nagahari K."/>
            <person name="Murakami K."/>
            <person name="Yasuda T."/>
            <person name="Iwayanagi T."/>
            <person name="Wagatsuma M."/>
            <person name="Shiratori A."/>
            <person name="Sudo H."/>
            <person name="Hosoiri T."/>
            <person name="Kaku Y."/>
            <person name="Kodaira H."/>
            <person name="Kondo H."/>
            <person name="Sugawara M."/>
            <person name="Takahashi M."/>
            <person name="Kanda K."/>
            <person name="Yokoi T."/>
            <person name="Furuya T."/>
            <person name="Kikkawa E."/>
            <person name="Omura Y."/>
            <person name="Abe K."/>
            <person name="Kamihara K."/>
            <person name="Katsuta N."/>
            <person name="Sato K."/>
            <person name="Tanikawa M."/>
            <person name="Yamazaki M."/>
            <person name="Ninomiya K."/>
            <person name="Ishibashi T."/>
            <person name="Yamashita H."/>
            <person name="Murakawa K."/>
            <person name="Fujimori K."/>
            <person name="Tanai H."/>
            <person name="Kimata M."/>
            <person name="Watanabe M."/>
            <person name="Hiraoka S."/>
            <person name="Chiba Y."/>
            <person name="Ishida S."/>
            <person name="Ono Y."/>
            <person name="Takiguchi S."/>
            <person name="Watanabe S."/>
            <person name="Yosida M."/>
            <person name="Hotuta T."/>
            <person name="Kusano J."/>
            <person name="Kanehori K."/>
            <person name="Takahashi-Fujii A."/>
            <person name="Hara H."/>
            <person name="Tanase T.-O."/>
            <person name="Nomura Y."/>
            <person name="Togiya S."/>
            <person name="Komai F."/>
            <person name="Hara R."/>
            <person name="Takeuchi K."/>
            <person name="Arita M."/>
            <person name="Imose N."/>
            <person name="Musashino K."/>
            <person name="Yuuki H."/>
            <person name="Oshima A."/>
            <person name="Sasaki N."/>
            <person name="Aotsuka S."/>
            <person name="Yoshikawa Y."/>
            <person name="Matsunawa H."/>
            <person name="Ichihara T."/>
            <person name="Shiohata N."/>
            <person name="Sano S."/>
            <person name="Moriya S."/>
            <person name="Momiyama H."/>
            <person name="Satoh N."/>
            <person name="Takami S."/>
            <person name="Terashima Y."/>
            <person name="Suzuki O."/>
            <person name="Nakagawa S."/>
            <person name="Senoh A."/>
            <person name="Mizoguchi H."/>
            <person name="Goto Y."/>
            <person name="Shimizu F."/>
            <person name="Wakebe H."/>
            <person name="Hishigaki H."/>
            <person name="Watanabe T."/>
            <person name="Sugiyama A."/>
            <person name="Takemoto M."/>
            <person name="Kawakami B."/>
            <person name="Yamazaki M."/>
            <person name="Watanabe K."/>
            <person name="Kumagai A."/>
            <person name="Itakura S."/>
            <person name="Fukuzumi Y."/>
            <person name="Fujimori Y."/>
            <person name="Komiyama M."/>
            <person name="Tashiro H."/>
            <person name="Tanigami A."/>
            <person name="Fujiwara T."/>
            <person name="Ono T."/>
            <person name="Yamada K."/>
            <person name="Fujii Y."/>
            <person name="Ozaki K."/>
            <person name="Hirao M."/>
            <person name="Ohmori Y."/>
            <person name="Kawabata A."/>
            <person name="Hikiji T."/>
            <person name="Kobatake N."/>
            <person name="Inagaki H."/>
            <person name="Ikema Y."/>
            <person name="Okamoto S."/>
            <person name="Okitani R."/>
            <person name="Kawakami T."/>
            <person name="Noguchi S."/>
            <person name="Itoh T."/>
            <person name="Shigeta K."/>
            <person name="Senba T."/>
            <person name="Matsumura K."/>
            <person name="Nakajima Y."/>
            <person name="Mizuno T."/>
            <person name="Morinaga M."/>
            <person name="Sasaki M."/>
            <person name="Togashi T."/>
            <person name="Oyama M."/>
            <person name="Hata H."/>
            <person name="Watanabe M."/>
            <person name="Komatsu T."/>
            <person name="Mizushima-Sugano J."/>
            <person name="Satoh T."/>
            <person name="Shirai Y."/>
            <person name="Takahashi Y."/>
            <person name="Nakagawa K."/>
            <person name="Okumura K."/>
            <person name="Nagase T."/>
            <person name="Nomura N."/>
            <person name="Kikuchi H."/>
            <person name="Masuho Y."/>
            <person name="Yamashita R."/>
            <person name="Nakai K."/>
            <person name="Yada T."/>
            <person name="Nakamura Y."/>
            <person name="Ohara O."/>
            <person name="Isogai T."/>
            <person name="Sugano S."/>
        </authorList>
    </citation>
    <scope>NUCLEOTIDE SEQUENCE [LARGE SCALE MRNA]</scope>
    <scope>VARIANT GLY-181</scope>
    <source>
        <tissue>Skeletal muscle</tissue>
    </source>
</reference>
<reference key="3">
    <citation type="submission" date="2004-06" db="EMBL/GenBank/DDBJ databases">
        <title>Cloning of human full open reading frames in Gateway(TM) system entry vector (pDONR201).</title>
        <authorList>
            <person name="Halleck A."/>
            <person name="Ebert L."/>
            <person name="Mkoundinya M."/>
            <person name="Schick M."/>
            <person name="Eisenstein S."/>
            <person name="Neubert P."/>
            <person name="Kstrang K."/>
            <person name="Schatten R."/>
            <person name="Shen B."/>
            <person name="Henze S."/>
            <person name="Mar W."/>
            <person name="Korn B."/>
            <person name="Zuo D."/>
            <person name="Hu Y."/>
            <person name="LaBaer J."/>
        </authorList>
    </citation>
    <scope>NUCLEOTIDE SEQUENCE [LARGE SCALE MRNA]</scope>
</reference>
<reference key="4">
    <citation type="submission" date="2005-04" db="EMBL/GenBank/DDBJ databases">
        <authorList>
            <person name="Totoki Y."/>
            <person name="Toyoda A."/>
            <person name="Takeda T."/>
            <person name="Sakaki Y."/>
            <person name="Tanaka A."/>
            <person name="Yokoyama S."/>
        </authorList>
    </citation>
    <scope>NUCLEOTIDE SEQUENCE [LARGE SCALE MRNA]</scope>
    <scope>VARIANT GLY-181</scope>
</reference>
<reference key="5">
    <citation type="journal article" date="2004" name="Nature">
        <title>The DNA sequence and comparative analysis of human chromosome 10.</title>
        <authorList>
            <person name="Deloukas P."/>
            <person name="Earthrowl M.E."/>
            <person name="Grafham D.V."/>
            <person name="Rubenfield M."/>
            <person name="French L."/>
            <person name="Steward C.A."/>
            <person name="Sims S.K."/>
            <person name="Jones M.C."/>
            <person name="Searle S."/>
            <person name="Scott C."/>
            <person name="Howe K."/>
            <person name="Hunt S.E."/>
            <person name="Andrews T.D."/>
            <person name="Gilbert J.G.R."/>
            <person name="Swarbreck D."/>
            <person name="Ashurst J.L."/>
            <person name="Taylor A."/>
            <person name="Battles J."/>
            <person name="Bird C.P."/>
            <person name="Ainscough R."/>
            <person name="Almeida J.P."/>
            <person name="Ashwell R.I.S."/>
            <person name="Ambrose K.D."/>
            <person name="Babbage A.K."/>
            <person name="Bagguley C.L."/>
            <person name="Bailey J."/>
            <person name="Banerjee R."/>
            <person name="Bates K."/>
            <person name="Beasley H."/>
            <person name="Bray-Allen S."/>
            <person name="Brown A.J."/>
            <person name="Brown J.Y."/>
            <person name="Burford D.C."/>
            <person name="Burrill W."/>
            <person name="Burton J."/>
            <person name="Cahill P."/>
            <person name="Camire D."/>
            <person name="Carter N.P."/>
            <person name="Chapman J.C."/>
            <person name="Clark S.Y."/>
            <person name="Clarke G."/>
            <person name="Clee C.M."/>
            <person name="Clegg S."/>
            <person name="Corby N."/>
            <person name="Coulson A."/>
            <person name="Dhami P."/>
            <person name="Dutta I."/>
            <person name="Dunn M."/>
            <person name="Faulkner L."/>
            <person name="Frankish A."/>
            <person name="Frankland J.A."/>
            <person name="Garner P."/>
            <person name="Garnett J."/>
            <person name="Gribble S."/>
            <person name="Griffiths C."/>
            <person name="Grocock R."/>
            <person name="Gustafson E."/>
            <person name="Hammond S."/>
            <person name="Harley J.L."/>
            <person name="Hart E."/>
            <person name="Heath P.D."/>
            <person name="Ho T.P."/>
            <person name="Hopkins B."/>
            <person name="Horne J."/>
            <person name="Howden P.J."/>
            <person name="Huckle E."/>
            <person name="Hynds C."/>
            <person name="Johnson C."/>
            <person name="Johnson D."/>
            <person name="Kana A."/>
            <person name="Kay M."/>
            <person name="Kimberley A.M."/>
            <person name="Kershaw J.K."/>
            <person name="Kokkinaki M."/>
            <person name="Laird G.K."/>
            <person name="Lawlor S."/>
            <person name="Lee H.M."/>
            <person name="Leongamornlert D.A."/>
            <person name="Laird G."/>
            <person name="Lloyd C."/>
            <person name="Lloyd D.M."/>
            <person name="Loveland J."/>
            <person name="Lovell J."/>
            <person name="McLaren S."/>
            <person name="McLay K.E."/>
            <person name="McMurray A."/>
            <person name="Mashreghi-Mohammadi M."/>
            <person name="Matthews L."/>
            <person name="Milne S."/>
            <person name="Nickerson T."/>
            <person name="Nguyen M."/>
            <person name="Overton-Larty E."/>
            <person name="Palmer S.A."/>
            <person name="Pearce A.V."/>
            <person name="Peck A.I."/>
            <person name="Pelan S."/>
            <person name="Phillimore B."/>
            <person name="Porter K."/>
            <person name="Rice C.M."/>
            <person name="Rogosin A."/>
            <person name="Ross M.T."/>
            <person name="Sarafidou T."/>
            <person name="Sehra H.K."/>
            <person name="Shownkeen R."/>
            <person name="Skuce C.D."/>
            <person name="Smith M."/>
            <person name="Standring L."/>
            <person name="Sycamore N."/>
            <person name="Tester J."/>
            <person name="Thorpe A."/>
            <person name="Torcasso W."/>
            <person name="Tracey A."/>
            <person name="Tromans A."/>
            <person name="Tsolas J."/>
            <person name="Wall M."/>
            <person name="Walsh J."/>
            <person name="Wang H."/>
            <person name="Weinstock K."/>
            <person name="West A.P."/>
            <person name="Willey D.L."/>
            <person name="Whitehead S.L."/>
            <person name="Wilming L."/>
            <person name="Wray P.W."/>
            <person name="Young L."/>
            <person name="Chen Y."/>
            <person name="Lovering R.C."/>
            <person name="Moschonas N.K."/>
            <person name="Siebert R."/>
            <person name="Fechtel K."/>
            <person name="Bentley D."/>
            <person name="Durbin R.M."/>
            <person name="Hubbard T."/>
            <person name="Doucette-Stamm L."/>
            <person name="Beck S."/>
            <person name="Smith D.R."/>
            <person name="Rogers J."/>
        </authorList>
    </citation>
    <scope>NUCLEOTIDE SEQUENCE [LARGE SCALE GENOMIC DNA]</scope>
</reference>
<reference key="6">
    <citation type="submission" date="2005-09" db="EMBL/GenBank/DDBJ databases">
        <authorList>
            <person name="Mural R.J."/>
            <person name="Istrail S."/>
            <person name="Sutton G.G."/>
            <person name="Florea L."/>
            <person name="Halpern A.L."/>
            <person name="Mobarry C.M."/>
            <person name="Lippert R."/>
            <person name="Walenz B."/>
            <person name="Shatkay H."/>
            <person name="Dew I."/>
            <person name="Miller J.R."/>
            <person name="Flanigan M.J."/>
            <person name="Edwards N.J."/>
            <person name="Bolanos R."/>
            <person name="Fasulo D."/>
            <person name="Halldorsson B.V."/>
            <person name="Hannenhalli S."/>
            <person name="Turner R."/>
            <person name="Yooseph S."/>
            <person name="Lu F."/>
            <person name="Nusskern D.R."/>
            <person name="Shue B.C."/>
            <person name="Zheng X.H."/>
            <person name="Zhong F."/>
            <person name="Delcher A.L."/>
            <person name="Huson D.H."/>
            <person name="Kravitz S.A."/>
            <person name="Mouchard L."/>
            <person name="Reinert K."/>
            <person name="Remington K.A."/>
            <person name="Clark A.G."/>
            <person name="Waterman M.S."/>
            <person name="Eichler E.E."/>
            <person name="Adams M.D."/>
            <person name="Hunkapiller M.W."/>
            <person name="Myers E.W."/>
            <person name="Venter J.C."/>
        </authorList>
    </citation>
    <scope>NUCLEOTIDE SEQUENCE [LARGE SCALE GENOMIC DNA]</scope>
</reference>
<reference key="7">
    <citation type="journal article" date="2004" name="Genome Res.">
        <title>The status, quality, and expansion of the NIH full-length cDNA project: the Mammalian Gene Collection (MGC).</title>
        <authorList>
            <consortium name="The MGC Project Team"/>
        </authorList>
    </citation>
    <scope>NUCLEOTIDE SEQUENCE [LARGE SCALE MRNA]</scope>
    <source>
        <tissue>Testis</tissue>
    </source>
</reference>
<reference key="8">
    <citation type="journal article" date="1998" name="RNA">
        <title>Autoantigenic properties of some protein subunits of catalytically active complexes of human ribonuclease P.</title>
        <authorList>
            <person name="Jarrous N."/>
            <person name="Eder P.S."/>
            <person name="Guerrier-Takada C."/>
            <person name="Hoog C."/>
            <person name="Altman S."/>
        </authorList>
    </citation>
    <scope>FUNCTION</scope>
    <scope>SUBUNIT</scope>
</reference>
<reference key="9">
    <citation type="journal article" date="1999" name="J. Cell Biol.">
        <title>Localization in the nucleolus and coiled bodies of protein subunits of the ribonucleoprotein ribonuclease P.</title>
        <authorList>
            <person name="Jarrous N."/>
            <person name="Wolenski J.S."/>
            <person name="Wesolowski D."/>
            <person name="Lee C."/>
            <person name="Altman S."/>
        </authorList>
    </citation>
    <scope>FUNCTION</scope>
    <scope>SUBCELLULAR LOCATION</scope>
    <scope>SUBUNIT</scope>
</reference>
<reference key="10">
    <citation type="journal article" date="2006" name="RNA">
        <title>Differential association of protein subunits with the human RNase MRP and RNase P complexes.</title>
        <authorList>
            <person name="Welting T.J."/>
            <person name="Kikkert B.J."/>
            <person name="van Venrooij W.J."/>
            <person name="Pruijn G.J."/>
        </authorList>
    </citation>
    <scope>IDENTIFICATION IN RNASE P AND MRP COMPLEXES</scope>
    <scope>SUBUNIT</scope>
</reference>
<reference key="11">
    <citation type="journal article" date="2008" name="Proc. Natl. Acad. Sci. U.S.A.">
        <title>A quantitative atlas of mitotic phosphorylation.</title>
        <authorList>
            <person name="Dephoure N."/>
            <person name="Zhou C."/>
            <person name="Villen J."/>
            <person name="Beausoleil S.A."/>
            <person name="Bakalarski C.E."/>
            <person name="Elledge S.J."/>
            <person name="Gygi S.P."/>
        </authorList>
    </citation>
    <scope>PHOSPHORYLATION [LARGE SCALE ANALYSIS] AT SER-235</scope>
    <scope>IDENTIFICATION BY MASS SPECTROMETRY [LARGE SCALE ANALYSIS]</scope>
    <source>
        <tissue>Cervix carcinoma</tissue>
    </source>
</reference>
<reference key="12">
    <citation type="journal article" date="2009" name="Anal. Chem.">
        <title>Lys-N and trypsin cover complementary parts of the phosphoproteome in a refined SCX-based approach.</title>
        <authorList>
            <person name="Gauci S."/>
            <person name="Helbig A.O."/>
            <person name="Slijper M."/>
            <person name="Krijgsveld J."/>
            <person name="Heck A.J."/>
            <person name="Mohammed S."/>
        </authorList>
    </citation>
    <scope>ACETYLATION [LARGE SCALE ANALYSIS] AT ALA-2</scope>
    <scope>CLEAVAGE OF INITIATOR METHIONINE [LARGE SCALE ANALYSIS]</scope>
    <scope>IDENTIFICATION BY MASS SPECTROMETRY [LARGE SCALE ANALYSIS]</scope>
</reference>
<reference key="13">
    <citation type="journal article" date="2009" name="Sci. Signal.">
        <title>Quantitative phosphoproteomic analysis of T cell receptor signaling reveals system-wide modulation of protein-protein interactions.</title>
        <authorList>
            <person name="Mayya V."/>
            <person name="Lundgren D.H."/>
            <person name="Hwang S.-I."/>
            <person name="Rezaul K."/>
            <person name="Wu L."/>
            <person name="Eng J.K."/>
            <person name="Rodionov V."/>
            <person name="Han D.K."/>
        </authorList>
    </citation>
    <scope>IDENTIFICATION BY MASS SPECTROMETRY [LARGE SCALE ANALYSIS]</scope>
    <source>
        <tissue>Leukemic T-cell</tissue>
    </source>
</reference>
<reference key="14">
    <citation type="journal article" date="2010" name="Sci. Signal.">
        <title>Quantitative phosphoproteomics reveals widespread full phosphorylation site occupancy during mitosis.</title>
        <authorList>
            <person name="Olsen J.V."/>
            <person name="Vermeulen M."/>
            <person name="Santamaria A."/>
            <person name="Kumar C."/>
            <person name="Miller M.L."/>
            <person name="Jensen L.J."/>
            <person name="Gnad F."/>
            <person name="Cox J."/>
            <person name="Jensen T.S."/>
            <person name="Nigg E.A."/>
            <person name="Brunak S."/>
            <person name="Mann M."/>
        </authorList>
    </citation>
    <scope>PHOSPHORYLATION [LARGE SCALE ANALYSIS] AT SER-235</scope>
    <scope>IDENTIFICATION BY MASS SPECTROMETRY [LARGE SCALE ANALYSIS]</scope>
    <source>
        <tissue>Cervix carcinoma</tissue>
    </source>
</reference>
<reference key="15">
    <citation type="journal article" date="2011" name="BMC Syst. Biol.">
        <title>Initial characterization of the human central proteome.</title>
        <authorList>
            <person name="Burkard T.R."/>
            <person name="Planyavsky M."/>
            <person name="Kaupe I."/>
            <person name="Breitwieser F.P."/>
            <person name="Buerckstuemmer T."/>
            <person name="Bennett K.L."/>
            <person name="Superti-Furga G."/>
            <person name="Colinge J."/>
        </authorList>
    </citation>
    <scope>IDENTIFICATION BY MASS SPECTROMETRY [LARGE SCALE ANALYSIS]</scope>
</reference>
<reference key="16">
    <citation type="journal article" date="2011" name="Sci. Signal.">
        <title>System-wide temporal characterization of the proteome and phosphoproteome of human embryonic stem cell differentiation.</title>
        <authorList>
            <person name="Rigbolt K.T."/>
            <person name="Prokhorova T.A."/>
            <person name="Akimov V."/>
            <person name="Henningsen J."/>
            <person name="Johansen P.T."/>
            <person name="Kratchmarova I."/>
            <person name="Kassem M."/>
            <person name="Mann M."/>
            <person name="Olsen J.V."/>
            <person name="Blagoev B."/>
        </authorList>
    </citation>
    <scope>PHOSPHORYLATION [LARGE SCALE ANALYSIS] AT SER-226</scope>
    <scope>IDENTIFICATION BY MASS SPECTROMETRY [LARGE SCALE ANALYSIS]</scope>
</reference>
<reference key="17">
    <citation type="journal article" date="2012" name="Proc. Natl. Acad. Sci. U.S.A.">
        <title>N-terminal acetylome analyses and functional insights of the N-terminal acetyltransferase NatB.</title>
        <authorList>
            <person name="Van Damme P."/>
            <person name="Lasa M."/>
            <person name="Polevoda B."/>
            <person name="Gazquez C."/>
            <person name="Elosegui-Artola A."/>
            <person name="Kim D.S."/>
            <person name="De Juan-Pardo E."/>
            <person name="Demeyer K."/>
            <person name="Hole K."/>
            <person name="Larrea E."/>
            <person name="Timmerman E."/>
            <person name="Prieto J."/>
            <person name="Arnesen T."/>
            <person name="Sherman F."/>
            <person name="Gevaert K."/>
            <person name="Aldabe R."/>
        </authorList>
    </citation>
    <scope>ACETYLATION [LARGE SCALE ANALYSIS] AT ALA-2</scope>
    <scope>CLEAVAGE OF INITIATOR METHIONINE [LARGE SCALE ANALYSIS]</scope>
    <scope>IDENTIFICATION BY MASS SPECTROMETRY [LARGE SCALE ANALYSIS]</scope>
</reference>
<reference key="18">
    <citation type="journal article" date="2013" name="J. Proteome Res.">
        <title>Toward a comprehensive characterization of a human cancer cell phosphoproteome.</title>
        <authorList>
            <person name="Zhou H."/>
            <person name="Di Palma S."/>
            <person name="Preisinger C."/>
            <person name="Peng M."/>
            <person name="Polat A.N."/>
            <person name="Heck A.J."/>
            <person name="Mohammed S."/>
        </authorList>
    </citation>
    <scope>PHOSPHORYLATION [LARGE SCALE ANALYSIS] AT SER-12 AND SER-235</scope>
    <scope>IDENTIFICATION BY MASS SPECTROMETRY [LARGE SCALE ANALYSIS]</scope>
    <source>
        <tissue>Cervix carcinoma</tissue>
        <tissue>Erythroleukemia</tissue>
    </source>
</reference>
<reference key="19">
    <citation type="journal article" date="2017" name="Genes Dev.">
        <title>Targeted CRISPR disruption reveals a role for RNase MRP RNA in human preribosomal RNA processing.</title>
        <authorList>
            <person name="Goldfarb K.C."/>
            <person name="Cech T.R."/>
        </authorList>
    </citation>
    <scope>FUNCTION</scope>
    <scope>SUBUNIT</scope>
</reference>
<reference evidence="10 11" key="20">
    <citation type="journal article" date="2018" name="Cell">
        <title>Cryo-EM Structure of the Human Ribonuclease P Holoenzyme.</title>
        <authorList>
            <person name="Wu J."/>
            <person name="Niu S."/>
            <person name="Tan M."/>
            <person name="Huang C."/>
            <person name="Li M."/>
            <person name="Song Y."/>
            <person name="Wang Q."/>
            <person name="Chen J."/>
            <person name="Shi S."/>
            <person name="Lan P."/>
            <person name="Lei M."/>
        </authorList>
    </citation>
    <scope>STRUCTURE BY ELECTRON MICROSCOPY (3.66 ANGSTROMS) OF RNASE P HOLOENZYME IN COMPLEX WITH TRNA</scope>
    <scope>FUNCTION</scope>
    <scope>SUBUNIT</scope>
</reference>